<dbReference type="EC" id="5.3.1.16" evidence="1"/>
<dbReference type="EMBL" id="CP000382">
    <property type="protein sequence ID" value="ABK60703.1"/>
    <property type="molecule type" value="Genomic_DNA"/>
</dbReference>
<dbReference type="RefSeq" id="WP_011721169.1">
    <property type="nucleotide sequence ID" value="NC_008593.1"/>
</dbReference>
<dbReference type="SMR" id="A0PXP7"/>
<dbReference type="STRING" id="386415.NT01CX_1065"/>
<dbReference type="KEGG" id="cno:NT01CX_1065"/>
<dbReference type="PATRIC" id="fig|386415.7.peg.174"/>
<dbReference type="eggNOG" id="COG0106">
    <property type="taxonomic scope" value="Bacteria"/>
</dbReference>
<dbReference type="HOGENOM" id="CLU_048577_1_1_9"/>
<dbReference type="UniPathway" id="UPA00031">
    <property type="reaction ID" value="UER00009"/>
</dbReference>
<dbReference type="Proteomes" id="UP000008220">
    <property type="component" value="Chromosome"/>
</dbReference>
<dbReference type="GO" id="GO:0005737">
    <property type="term" value="C:cytoplasm"/>
    <property type="evidence" value="ECO:0007669"/>
    <property type="project" value="UniProtKB-SubCell"/>
</dbReference>
<dbReference type="GO" id="GO:0003949">
    <property type="term" value="F:1-(5-phosphoribosyl)-5-[(5-phosphoribosylamino)methylideneamino]imidazole-4-carboxamide isomerase activity"/>
    <property type="evidence" value="ECO:0007669"/>
    <property type="project" value="UniProtKB-UniRule"/>
</dbReference>
<dbReference type="GO" id="GO:0000105">
    <property type="term" value="P:L-histidine biosynthetic process"/>
    <property type="evidence" value="ECO:0007669"/>
    <property type="project" value="UniProtKB-UniRule"/>
</dbReference>
<dbReference type="GO" id="GO:0000162">
    <property type="term" value="P:L-tryptophan biosynthetic process"/>
    <property type="evidence" value="ECO:0007669"/>
    <property type="project" value="TreeGrafter"/>
</dbReference>
<dbReference type="CDD" id="cd04732">
    <property type="entry name" value="HisA"/>
    <property type="match status" value="1"/>
</dbReference>
<dbReference type="FunFam" id="3.20.20.70:FF:000009">
    <property type="entry name" value="1-(5-phosphoribosyl)-5-[(5-phosphoribosylamino)methylideneamino] imidazole-4-carboxamide isomerase"/>
    <property type="match status" value="1"/>
</dbReference>
<dbReference type="Gene3D" id="3.20.20.70">
    <property type="entry name" value="Aldolase class I"/>
    <property type="match status" value="1"/>
</dbReference>
<dbReference type="HAMAP" id="MF_01014">
    <property type="entry name" value="HisA"/>
    <property type="match status" value="1"/>
</dbReference>
<dbReference type="InterPro" id="IPR013785">
    <property type="entry name" value="Aldolase_TIM"/>
</dbReference>
<dbReference type="InterPro" id="IPR006062">
    <property type="entry name" value="His_biosynth"/>
</dbReference>
<dbReference type="InterPro" id="IPR006063">
    <property type="entry name" value="HisA_bact_arch"/>
</dbReference>
<dbReference type="InterPro" id="IPR044524">
    <property type="entry name" value="Isoase_HisA-like"/>
</dbReference>
<dbReference type="InterPro" id="IPR023016">
    <property type="entry name" value="Isoase_HisA-like_bact"/>
</dbReference>
<dbReference type="InterPro" id="IPR011060">
    <property type="entry name" value="RibuloseP-bd_barrel"/>
</dbReference>
<dbReference type="NCBIfam" id="TIGR00007">
    <property type="entry name" value="1-(5-phosphoribosyl)-5-[(5-phosphoribosylamino)methylideneamino]imidazole-4-carboxamide isomerase"/>
    <property type="match status" value="1"/>
</dbReference>
<dbReference type="PANTHER" id="PTHR43090">
    <property type="entry name" value="1-(5-PHOSPHORIBOSYL)-5-[(5-PHOSPHORIBOSYLAMINO)METHYLIDENEAMINO] IMIDAZOLE-4-CARBOXAMIDE ISOMERASE"/>
    <property type="match status" value="1"/>
</dbReference>
<dbReference type="PANTHER" id="PTHR43090:SF2">
    <property type="entry name" value="1-(5-PHOSPHORIBOSYL)-5-[(5-PHOSPHORIBOSYLAMINO)METHYLIDENEAMINO] IMIDAZOLE-4-CARBOXAMIDE ISOMERASE"/>
    <property type="match status" value="1"/>
</dbReference>
<dbReference type="Pfam" id="PF00977">
    <property type="entry name" value="His_biosynth"/>
    <property type="match status" value="1"/>
</dbReference>
<dbReference type="SUPFAM" id="SSF51366">
    <property type="entry name" value="Ribulose-phoshate binding barrel"/>
    <property type="match status" value="1"/>
</dbReference>
<comment type="catalytic activity">
    <reaction evidence="1">
        <text>1-(5-phospho-beta-D-ribosyl)-5-[(5-phospho-beta-D-ribosylamino)methylideneamino]imidazole-4-carboxamide = 5-[(5-phospho-1-deoxy-D-ribulos-1-ylimino)methylamino]-1-(5-phospho-beta-D-ribosyl)imidazole-4-carboxamide</text>
        <dbReference type="Rhea" id="RHEA:15469"/>
        <dbReference type="ChEBI" id="CHEBI:58435"/>
        <dbReference type="ChEBI" id="CHEBI:58525"/>
        <dbReference type="EC" id="5.3.1.16"/>
    </reaction>
</comment>
<comment type="pathway">
    <text evidence="1">Amino-acid biosynthesis; L-histidine biosynthesis; L-histidine from 5-phospho-alpha-D-ribose 1-diphosphate: step 4/9.</text>
</comment>
<comment type="subcellular location">
    <subcellularLocation>
        <location evidence="1">Cytoplasm</location>
    </subcellularLocation>
</comment>
<comment type="similarity">
    <text evidence="1">Belongs to the HisA/HisF family.</text>
</comment>
<evidence type="ECO:0000255" key="1">
    <source>
        <dbReference type="HAMAP-Rule" id="MF_01014"/>
    </source>
</evidence>
<protein>
    <recommendedName>
        <fullName evidence="1">1-(5-phosphoribosyl)-5-[(5-phosphoribosylamino)methylideneamino] imidazole-4-carboxamide isomerase</fullName>
        <ecNumber evidence="1">5.3.1.16</ecNumber>
    </recommendedName>
    <alternativeName>
        <fullName evidence="1">Phosphoribosylformimino-5-aminoimidazole carboxamide ribotide isomerase</fullName>
    </alternativeName>
</protein>
<sequence>MIILPAIDLRMGKCVRLYKGDFNKTEIVAESAVDTALMFKECGAEYIHIVDLDGALKGKGINLDIVCELIKKVDIPIEFGGGIRDIETIDYLIDIGVSRIILGTAALNNEKLVREAIKRYDDKVAVGIDAKNGYVAVEGWLNLSNVNYIDFAKKMESIGVKNIIFTDISRDGTLNGPNFDALLKLKENINCNITASGGIKDVNDIKKLKEFNIYGAIVGKAIYSNNIDLKEAIKLSEK</sequence>
<name>HIS4_CLONN</name>
<accession>A0PXP7</accession>
<proteinExistence type="inferred from homology"/>
<keyword id="KW-0028">Amino-acid biosynthesis</keyword>
<keyword id="KW-0963">Cytoplasm</keyword>
<keyword id="KW-0368">Histidine biosynthesis</keyword>
<keyword id="KW-0413">Isomerase</keyword>
<keyword id="KW-1185">Reference proteome</keyword>
<gene>
    <name evidence="1" type="primary">hisA</name>
    <name type="ordered locus">NT01CX_1065</name>
</gene>
<feature type="chain" id="PRO_0000290465" description="1-(5-phosphoribosyl)-5-[(5-phosphoribosylamino)methylideneamino] imidazole-4-carboxamide isomerase">
    <location>
        <begin position="1"/>
        <end position="238"/>
    </location>
</feature>
<feature type="active site" description="Proton acceptor" evidence="1">
    <location>
        <position position="8"/>
    </location>
</feature>
<feature type="active site" description="Proton donor" evidence="1">
    <location>
        <position position="129"/>
    </location>
</feature>
<organism>
    <name type="scientific">Clostridium novyi (strain NT)</name>
    <dbReference type="NCBI Taxonomy" id="386415"/>
    <lineage>
        <taxon>Bacteria</taxon>
        <taxon>Bacillati</taxon>
        <taxon>Bacillota</taxon>
        <taxon>Clostridia</taxon>
        <taxon>Eubacteriales</taxon>
        <taxon>Clostridiaceae</taxon>
        <taxon>Clostridium</taxon>
    </lineage>
</organism>
<reference key="1">
    <citation type="journal article" date="2006" name="Nat. Biotechnol.">
        <title>The genome and transcriptomes of the anti-tumor agent Clostridium novyi-NT.</title>
        <authorList>
            <person name="Bettegowda C."/>
            <person name="Huang X."/>
            <person name="Lin J."/>
            <person name="Cheong I."/>
            <person name="Kohli M."/>
            <person name="Szabo S.A."/>
            <person name="Zhang X."/>
            <person name="Diaz L.A. Jr."/>
            <person name="Velculescu V.E."/>
            <person name="Parmigiani G."/>
            <person name="Kinzler K.W."/>
            <person name="Vogelstein B."/>
            <person name="Zhou S."/>
        </authorList>
    </citation>
    <scope>NUCLEOTIDE SEQUENCE [LARGE SCALE GENOMIC DNA]</scope>
    <source>
        <strain>NT</strain>
    </source>
</reference>